<reference key="1">
    <citation type="journal article" date="2002" name="J. Bacteriol.">
        <title>Whole-genome comparison of Mycobacterium tuberculosis clinical and laboratory strains.</title>
        <authorList>
            <person name="Fleischmann R.D."/>
            <person name="Alland D."/>
            <person name="Eisen J.A."/>
            <person name="Carpenter L."/>
            <person name="White O."/>
            <person name="Peterson J.D."/>
            <person name="DeBoy R.T."/>
            <person name="Dodson R.J."/>
            <person name="Gwinn M.L."/>
            <person name="Haft D.H."/>
            <person name="Hickey E.K."/>
            <person name="Kolonay J.F."/>
            <person name="Nelson W.C."/>
            <person name="Umayam L.A."/>
            <person name="Ermolaeva M.D."/>
            <person name="Salzberg S.L."/>
            <person name="Delcher A."/>
            <person name="Utterback T.R."/>
            <person name="Weidman J.F."/>
            <person name="Khouri H.M."/>
            <person name="Gill J."/>
            <person name="Mikula A."/>
            <person name="Bishai W."/>
            <person name="Jacobs W.R. Jr."/>
            <person name="Venter J.C."/>
            <person name="Fraser C.M."/>
        </authorList>
    </citation>
    <scope>NUCLEOTIDE SEQUENCE [LARGE SCALE GENOMIC DNA]</scope>
    <source>
        <strain>CDC 1551 / Oshkosh</strain>
    </source>
</reference>
<evidence type="ECO:0000305" key="1"/>
<organism>
    <name type="scientific">Mycobacterium tuberculosis (strain CDC 1551 / Oshkosh)</name>
    <dbReference type="NCBI Taxonomy" id="83331"/>
    <lineage>
        <taxon>Bacteria</taxon>
        <taxon>Bacillati</taxon>
        <taxon>Actinomycetota</taxon>
        <taxon>Actinomycetes</taxon>
        <taxon>Mycobacteriales</taxon>
        <taxon>Mycobacteriaceae</taxon>
        <taxon>Mycobacterium</taxon>
        <taxon>Mycobacterium tuberculosis complex</taxon>
    </lineage>
</organism>
<dbReference type="EMBL" id="AE000516">
    <property type="protein sequence ID" value="AAK47307.1"/>
    <property type="molecule type" value="Genomic_DNA"/>
</dbReference>
<dbReference type="PIR" id="D70928">
    <property type="entry name" value="D70928"/>
</dbReference>
<dbReference type="RefSeq" id="WP_003899536.1">
    <property type="nucleotide sequence ID" value="NZ_KK341227.1"/>
</dbReference>
<dbReference type="SMR" id="P9WJH8"/>
<dbReference type="KEGG" id="mtc:MT2981"/>
<dbReference type="PATRIC" id="fig|83331.31.peg.3221"/>
<dbReference type="HOGENOM" id="CLU_016107_1_0_11"/>
<dbReference type="Proteomes" id="UP000001020">
    <property type="component" value="Chromosome"/>
</dbReference>
<dbReference type="GO" id="GO:0005829">
    <property type="term" value="C:cytosol"/>
    <property type="evidence" value="ECO:0007669"/>
    <property type="project" value="TreeGrafter"/>
</dbReference>
<dbReference type="GO" id="GO:0016812">
    <property type="term" value="F:hydrolase activity, acting on carbon-nitrogen (but not peptide) bonds, in cyclic amides"/>
    <property type="evidence" value="ECO:0007669"/>
    <property type="project" value="TreeGrafter"/>
</dbReference>
<dbReference type="Gene3D" id="3.20.20.140">
    <property type="entry name" value="Metal-dependent hydrolases"/>
    <property type="match status" value="1"/>
</dbReference>
<dbReference type="InterPro" id="IPR013108">
    <property type="entry name" value="Amidohydro_3"/>
</dbReference>
<dbReference type="InterPro" id="IPR011059">
    <property type="entry name" value="Metal-dep_hydrolase_composite"/>
</dbReference>
<dbReference type="InterPro" id="IPR032466">
    <property type="entry name" value="Metal_Hydrolase"/>
</dbReference>
<dbReference type="InterPro" id="IPR050378">
    <property type="entry name" value="Metallo-dep_Hydrolases_sf"/>
</dbReference>
<dbReference type="PANTHER" id="PTHR11647:SF1">
    <property type="entry name" value="COLLAPSIN RESPONSE MEDIATOR PROTEIN"/>
    <property type="match status" value="1"/>
</dbReference>
<dbReference type="PANTHER" id="PTHR11647">
    <property type="entry name" value="HYDRANTOINASE/DIHYDROPYRIMIDINASE FAMILY MEMBER"/>
    <property type="match status" value="1"/>
</dbReference>
<dbReference type="Pfam" id="PF07969">
    <property type="entry name" value="Amidohydro_3"/>
    <property type="match status" value="1"/>
</dbReference>
<dbReference type="SUPFAM" id="SSF51338">
    <property type="entry name" value="Composite domain of metallo-dependent hydrolases"/>
    <property type="match status" value="1"/>
</dbReference>
<dbReference type="SUPFAM" id="SSF51556">
    <property type="entry name" value="Metallo-dependent hydrolases"/>
    <property type="match status" value="1"/>
</dbReference>
<protein>
    <recommendedName>
        <fullName>Uncharacterized protein MT2981</fullName>
    </recommendedName>
</protein>
<name>Y2913_MYCTO</name>
<accession>P9WJH8</accession>
<accession>L0TB05</accession>
<accession>P65530</accession>
<accession>Q10830</accession>
<comment type="similarity">
    <text evidence="1">Belongs to the metallo-dependent hydrolases superfamily. N-acyl-D-amino-acid deacylase family.</text>
</comment>
<feature type="chain" id="PRO_0000427827" description="Uncharacterized protein MT2981">
    <location>
        <begin position="1"/>
        <end position="611"/>
    </location>
</feature>
<gene>
    <name type="ordered locus">MT2981</name>
</gene>
<sequence>MLAWRQLNDLEETVTYDVIIRDGLWFDGTGNAPLTRTLGIRDGVVATVAAGALDETGCPEVVDAAGKWVVPGFIDVHTHYDAEVLLDPGLRESVRHGVTTVLLGNCSLSTVYANSEDAADLFSRVEAVPREFVLGALRDNQTWSTPAEYIEAIDALPLGPNVSSLLGHSDLRTAVLGLDRATDDTVRPTEAELAKMAKLLDEALEAGMLGMSGMDAAIDKLDGDRFRSRALPSTFATWRERRKLISVLRHRGRILQSAPDVDNPVSALLFFLASSRIFNRRKGVRMSMLVSADAKSMPLAVHVFGLGTRVLNKLLGSQVRFQHLPVPFELYSDGIDLPVFEEFGAGTAALHLRDQLQRNELLADRSYRRSFRREFDRIKLGPSLWHRDFHDAVIVECPDKSLIGKSFGAIADERGLHPLDAFLDVLVDNGERNVRWTTIVANHRPNQLNKLAAEPSVHMGFSDAGAHLRNMAFYNFGLRLLKRARDADRAGQPFLSIERAVYRLTGELAEWFGIGAGTLRQGDRADFAVIDPTHLDESVDGYHEEAVPYYGGLRRMVNRNDATVVATGVGGTVVFRGGQFGGQFRDGYGQNVKSGRYLRAGELGAALSRSA</sequence>
<proteinExistence type="inferred from homology"/>
<keyword id="KW-0378">Hydrolase</keyword>
<keyword id="KW-1185">Reference proteome</keyword>